<keyword id="KW-0072">Autophagy</keyword>
<keyword id="KW-0325">Glycoprotein</keyword>
<keyword id="KW-0472">Membrane</keyword>
<keyword id="KW-0653">Protein transport</keyword>
<keyword id="KW-1185">Reference proteome</keyword>
<keyword id="KW-0812">Transmembrane</keyword>
<keyword id="KW-1133">Transmembrane helix</keyword>
<keyword id="KW-0813">Transport</keyword>
<keyword id="KW-0926">Vacuole</keyword>
<organism>
    <name type="scientific">Candida albicans (strain SC5314 / ATCC MYA-2876)</name>
    <name type="common">Yeast</name>
    <dbReference type="NCBI Taxonomy" id="237561"/>
    <lineage>
        <taxon>Eukaryota</taxon>
        <taxon>Fungi</taxon>
        <taxon>Dikarya</taxon>
        <taxon>Ascomycota</taxon>
        <taxon>Saccharomycotina</taxon>
        <taxon>Pichiomycetes</taxon>
        <taxon>Debaryomycetaceae</taxon>
        <taxon>Candida/Lodderomyces clade</taxon>
        <taxon>Candida</taxon>
    </lineage>
</organism>
<reference key="1">
    <citation type="journal article" date="2004" name="Proc. Natl. Acad. Sci. U.S.A.">
        <title>The diploid genome sequence of Candida albicans.</title>
        <authorList>
            <person name="Jones T."/>
            <person name="Federspiel N.A."/>
            <person name="Chibana H."/>
            <person name="Dungan J."/>
            <person name="Kalman S."/>
            <person name="Magee B.B."/>
            <person name="Newport G."/>
            <person name="Thorstenson Y.R."/>
            <person name="Agabian N."/>
            <person name="Magee P.T."/>
            <person name="Davis R.W."/>
            <person name="Scherer S."/>
        </authorList>
    </citation>
    <scope>NUCLEOTIDE SEQUENCE [LARGE SCALE GENOMIC DNA]</scope>
    <source>
        <strain>SC5314 / ATCC MYA-2876</strain>
    </source>
</reference>
<reference key="2">
    <citation type="journal article" date="2007" name="Genome Biol.">
        <title>Assembly of the Candida albicans genome into sixteen supercontigs aligned on the eight chromosomes.</title>
        <authorList>
            <person name="van het Hoog M."/>
            <person name="Rast T.J."/>
            <person name="Martchenko M."/>
            <person name="Grindle S."/>
            <person name="Dignard D."/>
            <person name="Hogues H."/>
            <person name="Cuomo C."/>
            <person name="Berriman M."/>
            <person name="Scherer S."/>
            <person name="Magee B.B."/>
            <person name="Whiteway M."/>
            <person name="Chibana H."/>
            <person name="Nantel A."/>
            <person name="Magee P.T."/>
        </authorList>
    </citation>
    <scope>GENOME REANNOTATION</scope>
    <source>
        <strain>SC5314 / ATCC MYA-2876</strain>
    </source>
</reference>
<reference key="3">
    <citation type="journal article" date="2013" name="Genome Biol.">
        <title>Assembly of a phased diploid Candida albicans genome facilitates allele-specific measurements and provides a simple model for repeat and indel structure.</title>
        <authorList>
            <person name="Muzzey D."/>
            <person name="Schwartz K."/>
            <person name="Weissman J.S."/>
            <person name="Sherlock G."/>
        </authorList>
    </citation>
    <scope>NUCLEOTIDE SEQUENCE [LARGE SCALE GENOMIC DNA]</scope>
    <scope>GENOME REANNOTATION</scope>
    <source>
        <strain>SC5314 / ATCC MYA-2876</strain>
    </source>
</reference>
<dbReference type="EMBL" id="CP017630">
    <property type="protein sequence ID" value="AOW31197.1"/>
    <property type="molecule type" value="Genomic_DNA"/>
</dbReference>
<dbReference type="RefSeq" id="XP_717415.2">
    <property type="nucleotide sequence ID" value="XM_712322.2"/>
</dbReference>
<dbReference type="SMR" id="Q5A6K2"/>
<dbReference type="FunCoup" id="Q5A6K2">
    <property type="interactions" value="37"/>
</dbReference>
<dbReference type="STRING" id="237561.Q5A6K2"/>
<dbReference type="GlyCosmos" id="Q5A6K2">
    <property type="glycosylation" value="1 site, No reported glycans"/>
</dbReference>
<dbReference type="PeptideAtlas" id="Q5A6K2"/>
<dbReference type="EnsemblFungi" id="CR_04610C_A-T">
    <property type="protein sequence ID" value="CR_04610C_A-T-p1"/>
    <property type="gene ID" value="CR_04610C_A"/>
</dbReference>
<dbReference type="GeneID" id="3640951"/>
<dbReference type="KEGG" id="cal:CAALFM_CR04610CA"/>
<dbReference type="CGD" id="CAL0000198702">
    <property type="gene designation" value="orf19.8187"/>
</dbReference>
<dbReference type="VEuPathDB" id="FungiDB:CR_04610C_A"/>
<dbReference type="eggNOG" id="ENOG502QTIR">
    <property type="taxonomic scope" value="Eukaryota"/>
</dbReference>
<dbReference type="HOGENOM" id="CLU_034559_0_0_1"/>
<dbReference type="InParanoid" id="Q5A6K2"/>
<dbReference type="OrthoDB" id="42657at2759"/>
<dbReference type="PRO" id="PR:Q5A6K2"/>
<dbReference type="Proteomes" id="UP000000559">
    <property type="component" value="Chromosome R"/>
</dbReference>
<dbReference type="GO" id="GO:0005774">
    <property type="term" value="C:vacuolar membrane"/>
    <property type="evidence" value="ECO:0007669"/>
    <property type="project" value="UniProtKB-SubCell"/>
</dbReference>
<dbReference type="GO" id="GO:0032974">
    <property type="term" value="P:amino acid transmembrane export from vacuole"/>
    <property type="evidence" value="ECO:0000318"/>
    <property type="project" value="GO_Central"/>
</dbReference>
<dbReference type="GO" id="GO:0006914">
    <property type="term" value="P:autophagy"/>
    <property type="evidence" value="ECO:0007669"/>
    <property type="project" value="UniProtKB-KW"/>
</dbReference>
<dbReference type="GO" id="GO:0015031">
    <property type="term" value="P:protein transport"/>
    <property type="evidence" value="ECO:0007669"/>
    <property type="project" value="UniProtKB-KW"/>
</dbReference>
<dbReference type="Gene3D" id="1.20.1250.20">
    <property type="entry name" value="MFS general substrate transporter like domains"/>
    <property type="match status" value="1"/>
</dbReference>
<dbReference type="InterPro" id="IPR024671">
    <property type="entry name" value="Atg22-like"/>
</dbReference>
<dbReference type="InterPro" id="IPR050495">
    <property type="entry name" value="ATG22/LtaA_families"/>
</dbReference>
<dbReference type="InterPro" id="IPR036259">
    <property type="entry name" value="MFS_trans_sf"/>
</dbReference>
<dbReference type="PANTHER" id="PTHR23519">
    <property type="entry name" value="AUTOPHAGY-RELATED PROTEIN 22"/>
    <property type="match status" value="1"/>
</dbReference>
<dbReference type="PANTHER" id="PTHR23519:SF2">
    <property type="entry name" value="AUTOPHAGY-RELATED PROTEIN 22"/>
    <property type="match status" value="1"/>
</dbReference>
<dbReference type="Pfam" id="PF11700">
    <property type="entry name" value="ATG22"/>
    <property type="match status" value="1"/>
</dbReference>
<dbReference type="SUPFAM" id="SSF103473">
    <property type="entry name" value="MFS general substrate transporter"/>
    <property type="match status" value="1"/>
</dbReference>
<accession>Q5A6K2</accession>
<accession>A0A1D8PSS7</accession>
<comment type="function">
    <text evidence="1">May be required for lysis of autophagic vesicles after delivery to the vacuole.</text>
</comment>
<comment type="subcellular location">
    <subcellularLocation>
        <location evidence="1">Vacuole membrane</location>
        <topology evidence="1">Multi-pass membrane protein</topology>
    </subcellularLocation>
    <text evidence="1">Vacuole and punctate structures.</text>
</comment>
<comment type="similarity">
    <text evidence="4">Belongs to the ATG22 family.</text>
</comment>
<name>ATG22_CANAL</name>
<protein>
    <recommendedName>
        <fullName>Autophagy-related protein 22</fullName>
    </recommendedName>
</protein>
<evidence type="ECO:0000250" key="1"/>
<evidence type="ECO:0000255" key="2"/>
<evidence type="ECO:0000255" key="3">
    <source>
        <dbReference type="PROSITE-ProRule" id="PRU00498"/>
    </source>
</evidence>
<evidence type="ECO:0000305" key="4"/>
<feature type="chain" id="PRO_0000207619" description="Autophagy-related protein 22">
    <location>
        <begin position="1"/>
        <end position="500"/>
    </location>
</feature>
<feature type="transmembrane region" description="Helical" evidence="2">
    <location>
        <begin position="108"/>
        <end position="128"/>
    </location>
</feature>
<feature type="transmembrane region" description="Helical" evidence="2">
    <location>
        <begin position="137"/>
        <end position="157"/>
    </location>
</feature>
<feature type="transmembrane region" description="Helical" evidence="2">
    <location>
        <begin position="164"/>
        <end position="184"/>
    </location>
</feature>
<feature type="transmembrane region" description="Helical" evidence="2">
    <location>
        <begin position="209"/>
        <end position="229"/>
    </location>
</feature>
<feature type="transmembrane region" description="Helical" evidence="2">
    <location>
        <begin position="244"/>
        <end position="264"/>
    </location>
</feature>
<feature type="transmembrane region" description="Helical" evidence="2">
    <location>
        <begin position="304"/>
        <end position="324"/>
    </location>
</feature>
<feature type="transmembrane region" description="Helical" evidence="2">
    <location>
        <begin position="339"/>
        <end position="359"/>
    </location>
</feature>
<feature type="transmembrane region" description="Helical" evidence="2">
    <location>
        <begin position="368"/>
        <end position="388"/>
    </location>
</feature>
<feature type="transmembrane region" description="Helical" evidence="2">
    <location>
        <begin position="438"/>
        <end position="458"/>
    </location>
</feature>
<feature type="transmembrane region" description="Helical" evidence="2">
    <location>
        <begin position="467"/>
        <end position="487"/>
    </location>
</feature>
<feature type="glycosylation site" description="N-linked (GlcNAc...) asparagine" evidence="3">
    <location>
        <position position="14"/>
    </location>
</feature>
<proteinExistence type="inferred from homology"/>
<sequence>MKVNHNHISNTGVNDSEDILEAQDEISIDNNKNQENIWNKKSIFHTWLLLCYSTGPVASMSRTYIPASIQSIAKNVGKTKMNQPCGTQGNDCYVKFGFMTVHHTSYVLYLRAVSTAIEGVVAIFLMGIADYSNYRKSFLIFSILVYGFLALPFIGLTNNDYQTLVLASILYSLLIIDDSIYQILEGSYIPLFMRADKKNPMQRGSVVAVLGLFLGNLGGITALVIGIIISYLSGTPESKGYHNFLLAITIAGCLTIGLSLFSALYIPNVQGKQRIDNFLVLPFKRFFNLLKDIQKYPMAFLYCISWVIWNVSFNNFMSMFLLLFRSTLGLGNSDAEYTVYTFMSYICSSWGSLVWMFLYQKWNSNIKYWGYSFLSVSLLANFWGCLGIHKLTPLGYQNRWEFWVFEVFYSATSSAMRSLNRCVYSSLLPEGNEAQYFGLEVTLGIASGWIGGLVNAVIQDRTNDDRFPFLPNMFLVVVSLIVYYYVDLQKGKNDVNNGNS</sequence>
<gene>
    <name type="primary">ATG22</name>
    <name type="ordered locus">CAALFM_CR04610CA</name>
    <name type="ORF">CaO19.552</name>
    <name type="ORF">CaO19.8187</name>
</gene>